<feature type="chain" id="PRO_0000146411" description="Small ribosomal subunit protein uS12cz/uS12cy">
    <location>
        <begin position="1"/>
        <end position="123"/>
    </location>
</feature>
<dbReference type="EMBL" id="AJ627251">
    <property type="protein sequence ID" value="CAF28617.1"/>
    <property type="molecule type" value="Genomic_DNA"/>
</dbReference>
<dbReference type="EMBL" id="AJ627251">
    <property type="protein sequence ID" value="CAF28618.1"/>
    <property type="molecule type" value="Genomic_DNA"/>
</dbReference>
<dbReference type="SMR" id="Q6EW28"/>
<dbReference type="GO" id="GO:0009507">
    <property type="term" value="C:chloroplast"/>
    <property type="evidence" value="ECO:0007669"/>
    <property type="project" value="UniProtKB-SubCell"/>
</dbReference>
<dbReference type="GO" id="GO:0015935">
    <property type="term" value="C:small ribosomal subunit"/>
    <property type="evidence" value="ECO:0007669"/>
    <property type="project" value="InterPro"/>
</dbReference>
<dbReference type="GO" id="GO:0019843">
    <property type="term" value="F:rRNA binding"/>
    <property type="evidence" value="ECO:0007669"/>
    <property type="project" value="UniProtKB-UniRule"/>
</dbReference>
<dbReference type="GO" id="GO:0003735">
    <property type="term" value="F:structural constituent of ribosome"/>
    <property type="evidence" value="ECO:0007669"/>
    <property type="project" value="InterPro"/>
</dbReference>
<dbReference type="GO" id="GO:0006412">
    <property type="term" value="P:translation"/>
    <property type="evidence" value="ECO:0007669"/>
    <property type="project" value="UniProtKB-UniRule"/>
</dbReference>
<dbReference type="CDD" id="cd03368">
    <property type="entry name" value="Ribosomal_S12"/>
    <property type="match status" value="1"/>
</dbReference>
<dbReference type="FunFam" id="2.40.50.140:FF:000008">
    <property type="entry name" value="30S ribosomal protein S12, chloroplastic"/>
    <property type="match status" value="1"/>
</dbReference>
<dbReference type="Gene3D" id="2.40.50.140">
    <property type="entry name" value="Nucleic acid-binding proteins"/>
    <property type="match status" value="1"/>
</dbReference>
<dbReference type="HAMAP" id="MF_00403_B">
    <property type="entry name" value="Ribosomal_uS12_B"/>
    <property type="match status" value="1"/>
</dbReference>
<dbReference type="InterPro" id="IPR012340">
    <property type="entry name" value="NA-bd_OB-fold"/>
</dbReference>
<dbReference type="InterPro" id="IPR006032">
    <property type="entry name" value="Ribosomal_uS12"/>
</dbReference>
<dbReference type="InterPro" id="IPR005679">
    <property type="entry name" value="Ribosomal_uS12_bac"/>
</dbReference>
<dbReference type="NCBIfam" id="TIGR00981">
    <property type="entry name" value="rpsL_bact"/>
    <property type="match status" value="1"/>
</dbReference>
<dbReference type="PANTHER" id="PTHR11652">
    <property type="entry name" value="30S RIBOSOMAL PROTEIN S12 FAMILY MEMBER"/>
    <property type="match status" value="1"/>
</dbReference>
<dbReference type="Pfam" id="PF00164">
    <property type="entry name" value="Ribosom_S12_S23"/>
    <property type="match status" value="1"/>
</dbReference>
<dbReference type="PIRSF" id="PIRSF002133">
    <property type="entry name" value="Ribosomal_S12/S23"/>
    <property type="match status" value="1"/>
</dbReference>
<dbReference type="PRINTS" id="PR01034">
    <property type="entry name" value="RIBOSOMALS12"/>
</dbReference>
<dbReference type="SUPFAM" id="SSF50249">
    <property type="entry name" value="Nucleic acid-binding proteins"/>
    <property type="match status" value="1"/>
</dbReference>
<dbReference type="PROSITE" id="PS00055">
    <property type="entry name" value="RIBOSOMAL_S12"/>
    <property type="match status" value="1"/>
</dbReference>
<protein>
    <recommendedName>
        <fullName evidence="2">Small ribosomal subunit protein uS12cz/uS12cy</fullName>
    </recommendedName>
    <alternativeName>
        <fullName evidence="3">30S ribosomal protein S12, chloroplastic</fullName>
    </alternativeName>
</protein>
<keyword id="KW-0150">Chloroplast</keyword>
<keyword id="KW-0934">Plastid</keyword>
<keyword id="KW-0687">Ribonucleoprotein</keyword>
<keyword id="KW-0689">Ribosomal protein</keyword>
<keyword id="KW-0694">RNA-binding</keyword>
<keyword id="KW-0699">rRNA-binding</keyword>
<name>RR12_NYMAL</name>
<organism>
    <name type="scientific">Nymphaea alba</name>
    <name type="common">White water-lily</name>
    <name type="synonym">Castalia alba</name>
    <dbReference type="NCBI Taxonomy" id="34301"/>
    <lineage>
        <taxon>Eukaryota</taxon>
        <taxon>Viridiplantae</taxon>
        <taxon>Streptophyta</taxon>
        <taxon>Embryophyta</taxon>
        <taxon>Tracheophyta</taxon>
        <taxon>Spermatophyta</taxon>
        <taxon>Magnoliopsida</taxon>
        <taxon>Nymphaeales</taxon>
        <taxon>Nymphaeaceae</taxon>
        <taxon>Nymphaea</taxon>
    </lineage>
</organism>
<evidence type="ECO:0000250" key="1"/>
<evidence type="ECO:0000255" key="2">
    <source>
        <dbReference type="HAMAP-Rule" id="MF_00403"/>
    </source>
</evidence>
<evidence type="ECO:0000305" key="3"/>
<comment type="function">
    <text evidence="1">With S4 and S5 plays an important role in translational accuracy. Located at the interface of the 30S and 50S subunits (By similarity).</text>
</comment>
<comment type="subunit">
    <text evidence="1">Part of the 30S ribosomal subunit.</text>
</comment>
<comment type="subcellular location">
    <subcellularLocation>
        <location>Plastid</location>
        <location>Chloroplast</location>
    </subcellularLocation>
</comment>
<comment type="similarity">
    <text evidence="3">Belongs to the universal ribosomal protein uS12 family.</text>
</comment>
<accession>Q6EW28</accession>
<gene>
    <name type="primary">rps12-A</name>
</gene>
<gene>
    <name type="primary">rps12-B</name>
</gene>
<geneLocation type="chloroplast"/>
<sequence length="123" mass="13782">MPTIKQLIRNTRQPMRNVTKSPALRGCPQRRGTCTRVYTITPKKPNSALRKVARVRLTSGFEITAYIPGIGHNLQEHSVVLVRGGRVKDLPGVRYHIVRGTLDAVGVKDRQQGRSKYGVKKPK</sequence>
<proteinExistence type="inferred from homology"/>
<reference key="1">
    <citation type="journal article" date="2004" name="Mol. Biol. Evol.">
        <title>The chloroplast genome of Nymphaea alba: whole-genome analyses and the problem of identifying the most basal angiosperm.</title>
        <authorList>
            <person name="Goremykin V.V."/>
            <person name="Hirsch-Ernst K.I."/>
            <person name="Woelfl S."/>
            <person name="Hellwig F.H."/>
        </authorList>
    </citation>
    <scope>NUCLEOTIDE SEQUENCE [LARGE SCALE GENOMIC DNA]</scope>
</reference>